<sequence length="917" mass="104826">MNVDERSRIGGREKDAGPGKGILKQNQSSQMTSSFLENPGVRIPTRIITKKEVLDGSNTTSRINTSNLQSMVKRRVSFAPDVTLHSFTFVPEQNNEIKEPRRRKTSTNSPTKISSQEEPLVTSTQIDDARTEEKTAAEEDPDTSGMELTEPIVATPDSNKASQHDPTSMEMTEVFPRSIRQKNPDVEGESIESSQQIDDVEAVREETMELTAIHNVHDYDSISKDTVEGEPIDLTEYESKPYVPNSVSRSTGKSSDYSVERSNDKSDLSKSENKTNSSQPMEITDIFHADPQNPMSLHSDNNINNDGNEMELTQIQTNFDRDNHHIDESPSEKHAFSSNKRRKLDTVSDYAASVTTPVKEAKDTSGEDNDGDLEMMEKMSPITFSDVDNKIGTRSNDVFTIEPGTEDTGMQTATDDEEDGENVDDNGNKIVEKTRLPEIDKEGQSGIALPTQDYTLREFINEVGVGFLDTKLIDDLDKKVNFPLNSFNFVENQRIDNVFSAFYIDIPILEVEAFRCKELWRSINESKDKFKDFEAQIDKSHPPLLLQEYFSSDEKMKQLMRDQLQLVKGYSKLEAAMEWYEWRKKQLNGLELILAENLNTLKREYEKLNEEVEKVNSIRGKIRKLNEAIKEEIRSLKNLPSDSYKPTLMNRIKIEAFKQELMEHSISLSSSNDFTQEMRSLKLAIAKKSNDILTLRSEVASIDKKIEKRKLFTRFDLPKLRDTLKILESLTGVRFLKFSKATLSIAFLQLDDLRVDINLANFKNNPLSSMKVMNDSNNDDMSYHLFTMLLKNVEAEHQDSMLSNLFFAMKKWRPLLKYIKLLKLLFPVKITQTEEEEALLQFKDYDRRNKTAFFYVISLVSFAQGVFSENGQIPMKVHISTQQDYSPSREVLSDRITHKISGVLPSFTKSRIHLEFT</sequence>
<name>KNL1_YEAST</name>
<protein>
    <recommendedName>
        <fullName evidence="13">Outer kinetochore KNL1 complex subunit SPC105</fullName>
    </recommendedName>
    <alternativeName>
        <fullName>105 kDa spindle pole component protein</fullName>
    </alternativeName>
    <alternativeName>
        <fullName>Spindle pole body component SPC105</fullName>
    </alternativeName>
</protein>
<dbReference type="EMBL" id="Z72615">
    <property type="protein sequence ID" value="CAA96799.1"/>
    <property type="molecule type" value="Genomic_DNA"/>
</dbReference>
<dbReference type="EMBL" id="BK006941">
    <property type="protein sequence ID" value="DAA08013.1"/>
    <property type="molecule type" value="Genomic_DNA"/>
</dbReference>
<dbReference type="PIR" id="S64100">
    <property type="entry name" value="S64100"/>
</dbReference>
<dbReference type="RefSeq" id="NP_011422.1">
    <property type="nucleotide sequence ID" value="NM_001180958.1"/>
</dbReference>
<dbReference type="PDB" id="4BL0">
    <property type="method" value="X-ray"/>
    <property type="resolution" value="1.95 A"/>
    <property type="chains" value="C/F=165-183"/>
</dbReference>
<dbReference type="PDBsum" id="4BL0"/>
<dbReference type="SMR" id="P53148"/>
<dbReference type="BioGRID" id="33158">
    <property type="interactions" value="431"/>
</dbReference>
<dbReference type="ComplexPortal" id="CPX-1899">
    <property type="entry name" value="Spc105 complex"/>
</dbReference>
<dbReference type="DIP" id="DIP-3019N"/>
<dbReference type="FunCoup" id="P53148">
    <property type="interactions" value="128"/>
</dbReference>
<dbReference type="IntAct" id="P53148">
    <property type="interactions" value="10"/>
</dbReference>
<dbReference type="MINT" id="P53148"/>
<dbReference type="STRING" id="4932.YGL093W"/>
<dbReference type="iPTMnet" id="P53148"/>
<dbReference type="PaxDb" id="4932-YGL093W"/>
<dbReference type="PeptideAtlas" id="P53148"/>
<dbReference type="EnsemblFungi" id="YGL093W_mRNA">
    <property type="protein sequence ID" value="YGL093W"/>
    <property type="gene ID" value="YGL093W"/>
</dbReference>
<dbReference type="GeneID" id="852787"/>
<dbReference type="KEGG" id="sce:YGL093W"/>
<dbReference type="AGR" id="SGD:S000003061"/>
<dbReference type="SGD" id="S000003061">
    <property type="gene designation" value="SPC105"/>
</dbReference>
<dbReference type="VEuPathDB" id="FungiDB:YGL093W"/>
<dbReference type="eggNOG" id="ENOG502S20P">
    <property type="taxonomic scope" value="Eukaryota"/>
</dbReference>
<dbReference type="HOGENOM" id="CLU_012537_0_0_1"/>
<dbReference type="InParanoid" id="P53148"/>
<dbReference type="OMA" id="HSFDFVP"/>
<dbReference type="OrthoDB" id="5592879at2759"/>
<dbReference type="BioCyc" id="YEAST:G3O-30593-MONOMER"/>
<dbReference type="BioGRID-ORCS" id="852787">
    <property type="hits" value="9 hits in 10 CRISPR screens"/>
</dbReference>
<dbReference type="CD-CODE" id="876000F7">
    <property type="entry name" value="Centrosome"/>
</dbReference>
<dbReference type="EvolutionaryTrace" id="P53148"/>
<dbReference type="PRO" id="PR:P53148"/>
<dbReference type="Proteomes" id="UP000002311">
    <property type="component" value="Chromosome VII"/>
</dbReference>
<dbReference type="RNAct" id="P53148">
    <property type="molecule type" value="protein"/>
</dbReference>
<dbReference type="GO" id="GO:0000776">
    <property type="term" value="C:kinetochore"/>
    <property type="evidence" value="ECO:0000314"/>
    <property type="project" value="SGD"/>
</dbReference>
<dbReference type="GO" id="GO:0180019">
    <property type="term" value="C:Knl1/Spc105 complex"/>
    <property type="evidence" value="ECO:0000250"/>
    <property type="project" value="UniProtKB"/>
</dbReference>
<dbReference type="GO" id="GO:0005739">
    <property type="term" value="C:mitochondrion"/>
    <property type="evidence" value="ECO:0007005"/>
    <property type="project" value="SGD"/>
</dbReference>
<dbReference type="GO" id="GO:0005634">
    <property type="term" value="C:nucleus"/>
    <property type="evidence" value="ECO:0007669"/>
    <property type="project" value="UniProtKB-SubCell"/>
</dbReference>
<dbReference type="GO" id="GO:0000940">
    <property type="term" value="C:outer kinetochore"/>
    <property type="evidence" value="ECO:0000314"/>
    <property type="project" value="UniProtKB"/>
</dbReference>
<dbReference type="GO" id="GO:0008017">
    <property type="term" value="F:microtubule binding"/>
    <property type="evidence" value="ECO:0000314"/>
    <property type="project" value="SGD"/>
</dbReference>
<dbReference type="GO" id="GO:0031619">
    <property type="term" value="P:homologous chromosome orientation in meiotic metaphase I"/>
    <property type="evidence" value="ECO:0000250"/>
    <property type="project" value="UniProtKB"/>
</dbReference>
<dbReference type="GO" id="GO:0051382">
    <property type="term" value="P:kinetochore assembly"/>
    <property type="evidence" value="ECO:0000303"/>
    <property type="project" value="ComplexPortal"/>
</dbReference>
<dbReference type="GO" id="GO:1990758">
    <property type="term" value="P:mitotic sister chromatid biorientation"/>
    <property type="evidence" value="ECO:0000318"/>
    <property type="project" value="GO_Central"/>
</dbReference>
<dbReference type="GO" id="GO:0007094">
    <property type="term" value="P:mitotic spindle assembly checkpoint signaling"/>
    <property type="evidence" value="ECO:0000315"/>
    <property type="project" value="SGD"/>
</dbReference>
<dbReference type="GO" id="GO:1905326">
    <property type="term" value="P:positive regulation of meiosis I spindle assembly checkpoint"/>
    <property type="evidence" value="ECO:0000250"/>
    <property type="project" value="UniProtKB"/>
</dbReference>
<dbReference type="GO" id="GO:0034501">
    <property type="term" value="P:protein localization to kinetochore"/>
    <property type="evidence" value="ECO:0000315"/>
    <property type="project" value="SGD"/>
</dbReference>
<dbReference type="GO" id="GO:0031134">
    <property type="term" value="P:sister chromatid biorientation"/>
    <property type="evidence" value="ECO:0000315"/>
    <property type="project" value="SGD"/>
</dbReference>
<dbReference type="InterPro" id="IPR040850">
    <property type="entry name" value="Knl1_RWD_C"/>
</dbReference>
<dbReference type="InterPro" id="IPR033338">
    <property type="entry name" value="Spc105/Spc7"/>
</dbReference>
<dbReference type="InterPro" id="IPR013253">
    <property type="entry name" value="Spc7_domain"/>
</dbReference>
<dbReference type="PANTHER" id="PTHR28260">
    <property type="entry name" value="SPINDLE POLE BODY COMPONENT SPC105"/>
    <property type="match status" value="1"/>
</dbReference>
<dbReference type="PANTHER" id="PTHR28260:SF1">
    <property type="entry name" value="SPINDLE POLE BODY COMPONENT SPC105"/>
    <property type="match status" value="1"/>
</dbReference>
<dbReference type="Pfam" id="PF18210">
    <property type="entry name" value="Knl1_RWD_C"/>
    <property type="match status" value="1"/>
</dbReference>
<dbReference type="Pfam" id="PF08317">
    <property type="entry name" value="Spc7"/>
    <property type="match status" value="1"/>
</dbReference>
<dbReference type="SMART" id="SM00787">
    <property type="entry name" value="Spc7"/>
    <property type="match status" value="1"/>
</dbReference>
<reference key="1">
    <citation type="journal article" date="1997" name="Yeast">
        <title>Sequence analysis of 203 kilobases from Saccharomyces cerevisiae chromosome VII.</title>
        <authorList>
            <person name="Rieger M."/>
            <person name="Brueckner M."/>
            <person name="Schaefer M."/>
            <person name="Mueller-Auer S."/>
        </authorList>
    </citation>
    <scope>NUCLEOTIDE SEQUENCE [GENOMIC DNA]</scope>
    <source>
        <strain>ATCC 204508 / S288c</strain>
    </source>
</reference>
<reference key="2">
    <citation type="journal article" date="1997" name="Nature">
        <title>The nucleotide sequence of Saccharomyces cerevisiae chromosome VII.</title>
        <authorList>
            <person name="Tettelin H."/>
            <person name="Agostoni-Carbone M.L."/>
            <person name="Albermann K."/>
            <person name="Albers M."/>
            <person name="Arroyo J."/>
            <person name="Backes U."/>
            <person name="Barreiros T."/>
            <person name="Bertani I."/>
            <person name="Bjourson A.J."/>
            <person name="Brueckner M."/>
            <person name="Bruschi C.V."/>
            <person name="Carignani G."/>
            <person name="Castagnoli L."/>
            <person name="Cerdan E."/>
            <person name="Clemente M.L."/>
            <person name="Coblenz A."/>
            <person name="Coglievina M."/>
            <person name="Coissac E."/>
            <person name="Defoor E."/>
            <person name="Del Bino S."/>
            <person name="Delius H."/>
            <person name="Delneri D."/>
            <person name="de Wergifosse P."/>
            <person name="Dujon B."/>
            <person name="Durand P."/>
            <person name="Entian K.-D."/>
            <person name="Eraso P."/>
            <person name="Escribano V."/>
            <person name="Fabiani L."/>
            <person name="Fartmann B."/>
            <person name="Feroli F."/>
            <person name="Feuermann M."/>
            <person name="Frontali L."/>
            <person name="Garcia-Gonzalez M."/>
            <person name="Garcia-Saez M.I."/>
            <person name="Goffeau A."/>
            <person name="Guerreiro P."/>
            <person name="Hani J."/>
            <person name="Hansen M."/>
            <person name="Hebling U."/>
            <person name="Hernandez K."/>
            <person name="Heumann K."/>
            <person name="Hilger F."/>
            <person name="Hofmann B."/>
            <person name="Indge K.J."/>
            <person name="James C.M."/>
            <person name="Klima R."/>
            <person name="Koetter P."/>
            <person name="Kramer B."/>
            <person name="Kramer W."/>
            <person name="Lauquin G."/>
            <person name="Leuther H."/>
            <person name="Louis E.J."/>
            <person name="Maillier E."/>
            <person name="Marconi A."/>
            <person name="Martegani E."/>
            <person name="Mazon M.J."/>
            <person name="Mazzoni C."/>
            <person name="McReynolds A.D.K."/>
            <person name="Melchioretto P."/>
            <person name="Mewes H.-W."/>
            <person name="Minenkova O."/>
            <person name="Mueller-Auer S."/>
            <person name="Nawrocki A."/>
            <person name="Netter P."/>
            <person name="Neu R."/>
            <person name="Nombela C."/>
            <person name="Oliver S.G."/>
            <person name="Panzeri L."/>
            <person name="Paoluzi S."/>
            <person name="Plevani P."/>
            <person name="Portetelle D."/>
            <person name="Portillo F."/>
            <person name="Potier S."/>
            <person name="Purnelle B."/>
            <person name="Rieger M."/>
            <person name="Riles L."/>
            <person name="Rinaldi T."/>
            <person name="Robben J."/>
            <person name="Rodrigues-Pousada C."/>
            <person name="Rodriguez-Belmonte E."/>
            <person name="Rodriguez-Torres A.M."/>
            <person name="Rose M."/>
            <person name="Ruzzi M."/>
            <person name="Saliola M."/>
            <person name="Sanchez-Perez M."/>
            <person name="Schaefer B."/>
            <person name="Schaefer M."/>
            <person name="Scharfe M."/>
            <person name="Schmidheini T."/>
            <person name="Schreer A."/>
            <person name="Skala J."/>
            <person name="Souciet J.-L."/>
            <person name="Steensma H.Y."/>
            <person name="Talla E."/>
            <person name="Thierry A."/>
            <person name="Vandenbol M."/>
            <person name="van der Aart Q.J.M."/>
            <person name="Van Dyck L."/>
            <person name="Vanoni M."/>
            <person name="Verhasselt P."/>
            <person name="Voet M."/>
            <person name="Volckaert G."/>
            <person name="Wambutt R."/>
            <person name="Watson M.D."/>
            <person name="Weber N."/>
            <person name="Wedler E."/>
            <person name="Wedler H."/>
            <person name="Wipfli P."/>
            <person name="Wolf K."/>
            <person name="Wright L.F."/>
            <person name="Zaccaria P."/>
            <person name="Zimmermann M."/>
            <person name="Zollner A."/>
            <person name="Kleine K."/>
        </authorList>
    </citation>
    <scope>NUCLEOTIDE SEQUENCE [LARGE SCALE GENOMIC DNA]</scope>
    <source>
        <strain>ATCC 204508 / S288c</strain>
    </source>
</reference>
<reference key="3">
    <citation type="journal article" date="2014" name="G3 (Bethesda)">
        <title>The reference genome sequence of Saccharomyces cerevisiae: Then and now.</title>
        <authorList>
            <person name="Engel S.R."/>
            <person name="Dietrich F.S."/>
            <person name="Fisk D.G."/>
            <person name="Binkley G."/>
            <person name="Balakrishnan R."/>
            <person name="Costanzo M.C."/>
            <person name="Dwight S.S."/>
            <person name="Hitz B.C."/>
            <person name="Karra K."/>
            <person name="Nash R.S."/>
            <person name="Weng S."/>
            <person name="Wong E.D."/>
            <person name="Lloyd P."/>
            <person name="Skrzypek M.S."/>
            <person name="Miyasato S.R."/>
            <person name="Simison M."/>
            <person name="Cherry J.M."/>
        </authorList>
    </citation>
    <scope>GENOME REANNOTATION</scope>
    <source>
        <strain>ATCC 204508 / S288c</strain>
    </source>
</reference>
<reference key="4">
    <citation type="journal article" date="1998" name="J. Cell Biol.">
        <title>Analysis of the Saccharomyces spindle pole by matrix-assisted laser desorption/ionization (MALDI) mass spectrometry.</title>
        <authorList>
            <person name="Wigge P.A."/>
            <person name="Jensen O.N."/>
            <person name="Holmes S."/>
            <person name="Soues S."/>
            <person name="Mann M."/>
            <person name="Kilmartin J.V."/>
        </authorList>
    </citation>
    <scope>IDENTIFICATION BY MASS SPECTROMETRY</scope>
    <scope>SUBUNIT</scope>
    <scope>SUBCELLULAR LOCATION</scope>
</reference>
<reference key="5">
    <citation type="journal article" date="2003" name="Mol. Biol. Cell">
        <title>Interactions between centromere complexes in Saccharomyces cerevisiae.</title>
        <authorList>
            <person name="Nekrasov V.S."/>
            <person name="Smith M.A."/>
            <person name="Peak-Chew S."/>
            <person name="Kilmartin J.V."/>
        </authorList>
    </citation>
    <scope>SUBUNIT</scope>
    <scope>INTERACTION WITH KRE28</scope>
    <scope>SUBCELLULAR LOCATION</scope>
</reference>
<reference key="6">
    <citation type="journal article" date="2003" name="Nature">
        <title>Global analysis of protein localization in budding yeast.</title>
        <authorList>
            <person name="Huh W.-K."/>
            <person name="Falvo J.V."/>
            <person name="Gerke L.C."/>
            <person name="Carroll A.S."/>
            <person name="Howson R.W."/>
            <person name="Weissman J.S."/>
            <person name="O'Shea E.K."/>
        </authorList>
    </citation>
    <scope>SUBCELLULAR LOCATION [LARGE SCALE ANALYSIS]</scope>
</reference>
<reference key="7">
    <citation type="journal article" date="2006" name="Nat. Cell Biol.">
        <title>Molecular architecture of a kinetochore-microtubule attachment site.</title>
        <authorList>
            <person name="Joglekar A.P."/>
            <person name="Bouck D.C."/>
            <person name="Molk J.N."/>
            <person name="Bloom K.S."/>
            <person name="Salmon E.D."/>
        </authorList>
    </citation>
    <scope>SUBUNIT</scope>
    <scope>SUBCELLULAR LOCATION</scope>
</reference>
<reference key="8">
    <citation type="journal article" date="2007" name="J. Proteome Res.">
        <title>Large-scale phosphorylation analysis of alpha-factor-arrested Saccharomyces cerevisiae.</title>
        <authorList>
            <person name="Li X."/>
            <person name="Gerber S.A."/>
            <person name="Rudner A.D."/>
            <person name="Beausoleil S.A."/>
            <person name="Haas W."/>
            <person name="Villen J."/>
            <person name="Elias J.E."/>
            <person name="Gygi S.P."/>
        </authorList>
    </citation>
    <scope>PHOSPHORYLATION [LARGE SCALE ANALYSIS] AT THR-356 AND SER-380</scope>
    <scope>IDENTIFICATION BY MASS SPECTROMETRY [LARGE SCALE ANALYSIS]</scope>
    <source>
        <strain>ADR376</strain>
    </source>
</reference>
<reference key="9">
    <citation type="journal article" date="2008" name="Mol. Cell. Proteomics">
        <title>A multidimensional chromatography technology for in-depth phosphoproteome analysis.</title>
        <authorList>
            <person name="Albuquerque C.P."/>
            <person name="Smolka M.B."/>
            <person name="Payne S.H."/>
            <person name="Bafna V."/>
            <person name="Eng J."/>
            <person name="Zhou H."/>
        </authorList>
    </citation>
    <scope>PHOSPHORYLATION [LARGE SCALE ANALYSIS] AT SER-380</scope>
    <scope>IDENTIFICATION BY MASS SPECTROMETRY [LARGE SCALE ANALYSIS]</scope>
</reference>
<reference key="10">
    <citation type="journal article" date="2009" name="PLoS ONE">
        <title>Roles for the conserved spc105p/kre28p complex in kinetochore-microtubule binding and the spindle assembly checkpoint.</title>
        <authorList>
            <person name="Pagliuca C."/>
            <person name="Draviam V.M."/>
            <person name="Marco E."/>
            <person name="Sorger P.K."/>
            <person name="De Wulf P."/>
        </authorList>
    </citation>
    <scope>FUNCTION</scope>
    <scope>IDENTIFICATION IN THE KNL1 COMPLEX</scope>
    <scope>INTERACTION WITH KRE28</scope>
</reference>
<reference key="11">
    <citation type="journal article" date="2009" name="Science">
        <title>Global analysis of Cdk1 substrate phosphorylation sites provides insights into evolution.</title>
        <authorList>
            <person name="Holt L.J."/>
            <person name="Tuch B.B."/>
            <person name="Villen J."/>
            <person name="Johnson A.D."/>
            <person name="Gygi S.P."/>
            <person name="Morgan D.O."/>
        </authorList>
    </citation>
    <scope>PHOSPHORYLATION [LARGE SCALE ANALYSIS] AT SER-77; THR-356 AND SER-380</scope>
    <scope>IDENTIFICATION BY MASS SPECTROMETRY [LARGE SCALE ANALYSIS]</scope>
</reference>
<reference key="12">
    <citation type="journal article" date="2012" name="Curr. Biol.">
        <title>Phosphoregulation of Spc105 by Mps1 and PP1 regulates Bub1 localization to kinetochores.</title>
        <authorList>
            <person name="London N."/>
            <person name="Ceto S."/>
            <person name="Ranish J.A."/>
            <person name="Biggins S."/>
        </authorList>
    </citation>
    <scope>FUNCTION</scope>
    <scope>IDENTIFICATION IN THE KMN NETWORK</scope>
    <scope>INTERACTION WITH BUB1</scope>
    <scope>MELT MOTIF</scope>
    <scope>PHOSPHORYLATION AT THR-149; THR-172 AND THR-235</scope>
</reference>
<reference key="13">
    <citation type="journal article" date="2012" name="Nat. Cell Biol.">
        <title>Cnn1 inhibits the interactions between the KMN complexes of the yeast kinetochore.</title>
        <authorList>
            <person name="Bock L.J."/>
            <person name="Pagliuca C."/>
            <person name="Kobayashi N."/>
            <person name="Grove R.A."/>
            <person name="Oku Y."/>
            <person name="Shrestha K."/>
            <person name="Alfieri C."/>
            <person name="Golfieri C."/>
            <person name="Oldani A."/>
            <person name="Dal Maschio M."/>
            <person name="Bermejo R."/>
            <person name="Hazbun T.R."/>
            <person name="Tanaka T.U."/>
            <person name="De Wulf P."/>
        </authorList>
    </citation>
    <scope>SUBCELLULAR LOCATION</scope>
</reference>
<reference key="14">
    <citation type="journal article" date="2022" name="Open Biol.">
        <title>Kre28-Spc105 interaction is essential for Spc105 loading at the kinetochore.</title>
        <authorList>
            <person name="Roy B."/>
            <person name="Sim J."/>
            <person name="Han S.J.Y."/>
            <person name="Joglekar A.P."/>
        </authorList>
    </citation>
    <scope>FUNCTION</scope>
    <scope>INTERACTION WITH KRE28</scope>
    <scope>SUBCELLULAR LOCATION</scope>
    <scope>DISRUPTION PHENOTYPE</scope>
</reference>
<reference key="15">
    <citation type="journal article" date="2020" name="Cell Rep.">
        <title>C-Terminal Motifs of the MTW1 Complex Cooperatively Stabilize Outer Kinetochore Assembly in Budding Yeast.</title>
        <authorList>
            <person name="Ghodgaonkar-Steger M."/>
            <person name="Potocnjak M."/>
            <person name="Zimniak T."/>
            <person name="Fischboeck-Halwachs J."/>
            <person name="Solis-Mezarino V."/>
            <person name="Singh S."/>
            <person name="Speljko T."/>
            <person name="Hagemann G."/>
            <person name="Drexler D.J."/>
            <person name="Witte G."/>
            <person name="Herzog F."/>
        </authorList>
    </citation>
    <scope>FUNCTION</scope>
    <scope>IDENTIFICATION IN THE KMN NETWORK AND THE KNL1 COMPLEX</scope>
    <scope>INTERACTION WITH SPC24; SPC25; CNN1; MTW1 AND NSL1</scope>
    <scope>IDENTIFICATION BY MASS SPECTROMETRY</scope>
</reference>
<reference evidence="17" key="16">
    <citation type="journal article" date="2013" name="Elife">
        <title>Bub3 reads phosphorylated MELT repeats to promote spindle assembly checkpoint signaling.</title>
        <authorList>
            <person name="Primorac I."/>
            <person name="Weir J.R."/>
            <person name="Chiroli E."/>
            <person name="Gross F."/>
            <person name="Hoffmann I."/>
            <person name="van Gerwen S."/>
            <person name="Ciliberto A."/>
            <person name="Musacchio A."/>
        </authorList>
    </citation>
    <scope>X-RAY CRYSTALLOGRAPHY (1.95 ANGSTROMS) OF 165-183 IN COMPLEX WITH BUB1 AND BUB3</scope>
    <scope>MELT MOTIF</scope>
</reference>
<accession>P53148</accession>
<accession>D6VU52</accession>
<feature type="chain" id="PRO_0000202755" description="Outer kinetochore KNL1 complex subunit SPC105">
    <location>
        <begin position="1"/>
        <end position="917"/>
    </location>
</feature>
<feature type="region of interest" description="Disordered" evidence="2">
    <location>
        <begin position="1"/>
        <end position="38"/>
    </location>
</feature>
<feature type="region of interest" description="Disordered" evidence="2">
    <location>
        <begin position="93"/>
        <end position="172"/>
    </location>
</feature>
<feature type="region of interest" description="Interacts with the BUB1-BUB3 complex" evidence="8">
    <location>
        <begin position="165"/>
        <end position="183"/>
    </location>
</feature>
<feature type="region of interest" description="Disordered" evidence="2">
    <location>
        <begin position="235"/>
        <end position="282"/>
    </location>
</feature>
<feature type="region of interest" description="Disordered" evidence="2">
    <location>
        <begin position="324"/>
        <end position="343"/>
    </location>
</feature>
<feature type="region of interest" description="Disordered" evidence="2">
    <location>
        <begin position="397"/>
        <end position="427"/>
    </location>
</feature>
<feature type="region of interest" description="Required for interaction with KRE28" evidence="10 16">
    <location>
        <begin position="507"/>
        <end position="638"/>
    </location>
</feature>
<feature type="coiled-coil region" evidence="1">
    <location>
        <begin position="591"/>
        <end position="628"/>
    </location>
</feature>
<feature type="short sequence motif" description="MELT" evidence="14 15">
    <location>
        <begin position="146"/>
        <end position="149"/>
    </location>
</feature>
<feature type="short sequence motif" description="MELT; degenerate" evidence="14 15">
    <location>
        <begin position="169"/>
        <end position="172"/>
    </location>
</feature>
<feature type="short sequence motif" description="MELT; degenerate" evidence="14 15">
    <location>
        <begin position="232"/>
        <end position="235"/>
    </location>
</feature>
<feature type="compositionally biased region" description="Basic and acidic residues" evidence="2">
    <location>
        <begin position="1"/>
        <end position="17"/>
    </location>
</feature>
<feature type="compositionally biased region" description="Polar residues" evidence="2">
    <location>
        <begin position="24"/>
        <end position="36"/>
    </location>
</feature>
<feature type="compositionally biased region" description="Polar residues" evidence="2">
    <location>
        <begin position="106"/>
        <end position="126"/>
    </location>
</feature>
<feature type="compositionally biased region" description="Basic and acidic residues" evidence="2">
    <location>
        <begin position="127"/>
        <end position="137"/>
    </location>
</feature>
<feature type="compositionally biased region" description="Polar residues" evidence="2">
    <location>
        <begin position="156"/>
        <end position="170"/>
    </location>
</feature>
<feature type="compositionally biased region" description="Polar residues" evidence="2">
    <location>
        <begin position="245"/>
        <end position="257"/>
    </location>
</feature>
<feature type="compositionally biased region" description="Basic and acidic residues" evidence="2">
    <location>
        <begin position="258"/>
        <end position="273"/>
    </location>
</feature>
<feature type="compositionally biased region" description="Basic and acidic residues" evidence="2">
    <location>
        <begin position="324"/>
        <end position="335"/>
    </location>
</feature>
<feature type="compositionally biased region" description="Acidic residues" evidence="2">
    <location>
        <begin position="414"/>
        <end position="424"/>
    </location>
</feature>
<feature type="modified residue" description="Phosphoserine" evidence="20">
    <location>
        <position position="77"/>
    </location>
</feature>
<feature type="modified residue" description="Phosphothreonine; by MPS1" evidence="6">
    <location>
        <position position="149"/>
    </location>
</feature>
<feature type="modified residue" description="Phosphothreonine; by MPS1" evidence="6">
    <location>
        <position position="172"/>
    </location>
</feature>
<feature type="modified residue" description="Phosphothreonine; by MPS1" evidence="6">
    <location>
        <position position="235"/>
    </location>
</feature>
<feature type="modified residue" description="Phosphothreonine" evidence="18 20">
    <location>
        <position position="356"/>
    </location>
</feature>
<feature type="modified residue" description="Phosphoserine" evidence="18 19 20">
    <location>
        <position position="380"/>
    </location>
</feature>
<feature type="strand" evidence="21">
    <location>
        <begin position="170"/>
        <end position="172"/>
    </location>
</feature>
<proteinExistence type="evidence at protein level"/>
<gene>
    <name type="primary">SPC105</name>
    <name evidence="12" type="synonym">KNL1</name>
    <name type="ordered locus">YGL093W</name>
</gene>
<organism>
    <name type="scientific">Saccharomyces cerevisiae (strain ATCC 204508 / S288c)</name>
    <name type="common">Baker's yeast</name>
    <dbReference type="NCBI Taxonomy" id="559292"/>
    <lineage>
        <taxon>Eukaryota</taxon>
        <taxon>Fungi</taxon>
        <taxon>Dikarya</taxon>
        <taxon>Ascomycota</taxon>
        <taxon>Saccharomycotina</taxon>
        <taxon>Saccharomycetes</taxon>
        <taxon>Saccharomycetales</taxon>
        <taxon>Saccharomycetaceae</taxon>
        <taxon>Saccharomyces</taxon>
    </lineage>
</organism>
<keyword id="KW-0002">3D-structure</keyword>
<keyword id="KW-0137">Centromere</keyword>
<keyword id="KW-0158">Chromosome</keyword>
<keyword id="KW-0175">Coiled coil</keyword>
<keyword id="KW-0995">Kinetochore</keyword>
<keyword id="KW-0539">Nucleus</keyword>
<keyword id="KW-0597">Phosphoprotein</keyword>
<keyword id="KW-1185">Reference proteome</keyword>
<evidence type="ECO:0000255" key="1"/>
<evidence type="ECO:0000256" key="2">
    <source>
        <dbReference type="SAM" id="MobiDB-lite"/>
    </source>
</evidence>
<evidence type="ECO:0000269" key="3">
    <source>
    </source>
</evidence>
<evidence type="ECO:0000269" key="4">
    <source>
    </source>
</evidence>
<evidence type="ECO:0000269" key="5">
    <source>
    </source>
</evidence>
<evidence type="ECO:0000269" key="6">
    <source>
    </source>
</evidence>
<evidence type="ECO:0000269" key="7">
    <source>
    </source>
</evidence>
<evidence type="ECO:0000269" key="8">
    <source>
    </source>
</evidence>
<evidence type="ECO:0000269" key="9">
    <source>
    </source>
</evidence>
<evidence type="ECO:0000269" key="10">
    <source>
    </source>
</evidence>
<evidence type="ECO:0000269" key="11">
    <source>
    </source>
</evidence>
<evidence type="ECO:0000303" key="12">
    <source>
    </source>
</evidence>
<evidence type="ECO:0000305" key="13"/>
<evidence type="ECO:0000305" key="14">
    <source>
    </source>
</evidence>
<evidence type="ECO:0000305" key="15">
    <source>
    </source>
</evidence>
<evidence type="ECO:0000305" key="16">
    <source>
    </source>
</evidence>
<evidence type="ECO:0007744" key="17">
    <source>
        <dbReference type="PDB" id="4BL0"/>
    </source>
</evidence>
<evidence type="ECO:0007744" key="18">
    <source>
    </source>
</evidence>
<evidence type="ECO:0007744" key="19">
    <source>
    </source>
</evidence>
<evidence type="ECO:0007744" key="20">
    <source>
    </source>
</evidence>
<evidence type="ECO:0007829" key="21">
    <source>
        <dbReference type="PDB" id="4BL0"/>
    </source>
</evidence>
<comment type="function">
    <text evidence="5 6 9 10">Acts as a component of the outer kinetochore KNL1 complex that serves as a docking point for spindle assembly checkpoint components and mediates microtubule-kinetochore interactions (PubMed:19893618, PubMed:22521787, PubMed:32997987, PubMed:35042402). Kinetochores, consisting of a centromere-associated inner segment and a microtubule-contacting outer segment, play a crucial role in chromosome segregation by mediating the physical connection between centromeric DNA and spindle microtubules (PubMed:19893618). The outer kinetochore is made up of the ten-subunit KMN network, comprising the MIS12, NDC80 and KNL1 complexes, and auxiliary microtubule-associated components; together they connect the outer kinetochore with the inner kinetochore, bind microtubules, and mediate interactions with mitotic checkpoint proteins that delay anaphase until chromosomes are bioriented on the spindle (PubMed:19893618, PubMed:22521787, PubMed:32997987, PubMed:35042402). Recruits the BUB1-BUB3 complex to kinetochores when phosphorylated by MPS1, to support spindle assembly checkpoint signaling; the effect is reversed by protein phosphatase 1 (PP1) (PubMed:22521787). The KNL1 complex is required for kinetochore binding by the kMAPs (kinetochore-bound microtubule-associated proteins) BIM1, BIK1 and SLK19, and motors CIN8 and KAR3 (PubMed:19893618).</text>
</comment>
<comment type="subunit">
    <text evidence="3 4 5 6 8 9 10 11">Component of the KNL1/SPC105 complex composed of SPC105 and KRE28 (PubMed:14565975, PubMed:16715078, PubMed:19893618, PubMed:32997987, PubMed:35042402, PubMed:9585415). Part of the outer kinetochore KMN network that includes the KNL1, MIS12 and NDC80 complexes (PubMed:14565975, PubMed:16715078, PubMed:19893618, PubMed:22521787, PubMed:32997987, PubMed:9585415). Interacts (via phosphorylated MELT motifs) with BUB1 and BUB3 in the BUB1-BUB3 complex; the interaction is direct (PubMed:22521787, PubMed:24066227). Interacts with the MIS12 complex subunits MTW1 (via C-terminus) and NSL1 (via C-terminus) (PubMed:32997987). Interacts with the NDC80 complex subunits SPC24 and SPC25 (PubMed:32997987). Interacts with CNN1 (via N-terminus) (PubMed:32997987).</text>
</comment>
<comment type="interaction">
    <interactant intactId="EBI-23870">
        <id>P53148</id>
    </interactant>
    <interactant intactId="EBI-32446">
        <id>Q04431</id>
        <label>KRE28</label>
    </interactant>
    <organismsDiffer>false</organismsDiffer>
    <experiments>4</experiments>
</comment>
<comment type="interaction">
    <interactant intactId="EBI-23870">
        <id>P53148</id>
    </interactant>
    <interactant intactId="EBI-25247">
        <id>P40460</id>
        <label>NDC80</label>
    </interactant>
    <organismsDiffer>false</organismsDiffer>
    <experiments>2</experiments>
</comment>
<comment type="interaction">
    <interactant intactId="EBI-23870">
        <id>P53148</id>
    </interactant>
    <interactant intactId="EBI-27228">
        <id>Q04477</id>
        <label>SPC24</label>
    </interactant>
    <organismsDiffer>false</organismsDiffer>
    <experiments>5</experiments>
</comment>
<comment type="subcellular location">
    <subcellularLocation>
        <location evidence="3">Nucleus</location>
    </subcellularLocation>
    <subcellularLocation>
        <location evidence="3 7 10">Chromosome</location>
        <location evidence="3 7 10">Centromere</location>
        <location evidence="3 7 10">Kinetochore</location>
    </subcellularLocation>
</comment>
<comment type="disruption phenotype">
    <text evidence="10">Inviable.</text>
</comment>